<reference key="1">
    <citation type="journal article" date="2006" name="Lancet">
        <title>Complete genome sequence of USA300, an epidemic clone of community-acquired meticillin-resistant Staphylococcus aureus.</title>
        <authorList>
            <person name="Diep B.A."/>
            <person name="Gill S.R."/>
            <person name="Chang R.F."/>
            <person name="Phan T.H."/>
            <person name="Chen J.H."/>
            <person name="Davidson M.G."/>
            <person name="Lin F."/>
            <person name="Lin J."/>
            <person name="Carleton H.A."/>
            <person name="Mongodin E.F."/>
            <person name="Sensabaugh G.F."/>
            <person name="Perdreau-Remington F."/>
        </authorList>
    </citation>
    <scope>NUCLEOTIDE SEQUENCE [LARGE SCALE GENOMIC DNA]</scope>
    <source>
        <strain>USA300</strain>
    </source>
</reference>
<evidence type="ECO:0000255" key="1">
    <source>
        <dbReference type="HAMAP-Rule" id="MF_00300"/>
    </source>
</evidence>
<dbReference type="EC" id="4.2.3.5" evidence="1"/>
<dbReference type="EMBL" id="CP000255">
    <property type="protein sequence ID" value="ABD20383.1"/>
    <property type="molecule type" value="Genomic_DNA"/>
</dbReference>
<dbReference type="RefSeq" id="WP_001269929.1">
    <property type="nucleotide sequence ID" value="NZ_CP027476.1"/>
</dbReference>
<dbReference type="SMR" id="Q2FGX4"/>
<dbReference type="KEGG" id="saa:SAUSA300_1357"/>
<dbReference type="HOGENOM" id="CLU_034547_2_0_9"/>
<dbReference type="OMA" id="MLSINAV"/>
<dbReference type="UniPathway" id="UPA00053">
    <property type="reaction ID" value="UER00090"/>
</dbReference>
<dbReference type="Proteomes" id="UP000001939">
    <property type="component" value="Chromosome"/>
</dbReference>
<dbReference type="GO" id="GO:0005829">
    <property type="term" value="C:cytosol"/>
    <property type="evidence" value="ECO:0007669"/>
    <property type="project" value="TreeGrafter"/>
</dbReference>
<dbReference type="GO" id="GO:0004107">
    <property type="term" value="F:chorismate synthase activity"/>
    <property type="evidence" value="ECO:0007669"/>
    <property type="project" value="UniProtKB-UniRule"/>
</dbReference>
<dbReference type="GO" id="GO:0010181">
    <property type="term" value="F:FMN binding"/>
    <property type="evidence" value="ECO:0007669"/>
    <property type="project" value="TreeGrafter"/>
</dbReference>
<dbReference type="GO" id="GO:0008652">
    <property type="term" value="P:amino acid biosynthetic process"/>
    <property type="evidence" value="ECO:0007669"/>
    <property type="project" value="UniProtKB-KW"/>
</dbReference>
<dbReference type="GO" id="GO:0009073">
    <property type="term" value="P:aromatic amino acid family biosynthetic process"/>
    <property type="evidence" value="ECO:0007669"/>
    <property type="project" value="UniProtKB-KW"/>
</dbReference>
<dbReference type="GO" id="GO:0009423">
    <property type="term" value="P:chorismate biosynthetic process"/>
    <property type="evidence" value="ECO:0007669"/>
    <property type="project" value="UniProtKB-UniRule"/>
</dbReference>
<dbReference type="CDD" id="cd07304">
    <property type="entry name" value="Chorismate_synthase"/>
    <property type="match status" value="1"/>
</dbReference>
<dbReference type="FunFam" id="3.60.150.10:FF:000002">
    <property type="entry name" value="Chorismate synthase"/>
    <property type="match status" value="1"/>
</dbReference>
<dbReference type="Gene3D" id="3.60.150.10">
    <property type="entry name" value="Chorismate synthase AroC"/>
    <property type="match status" value="1"/>
</dbReference>
<dbReference type="HAMAP" id="MF_00300">
    <property type="entry name" value="Chorismate_synth"/>
    <property type="match status" value="1"/>
</dbReference>
<dbReference type="InterPro" id="IPR000453">
    <property type="entry name" value="Chorismate_synth"/>
</dbReference>
<dbReference type="InterPro" id="IPR035904">
    <property type="entry name" value="Chorismate_synth_AroC_sf"/>
</dbReference>
<dbReference type="InterPro" id="IPR020541">
    <property type="entry name" value="Chorismate_synthase_CS"/>
</dbReference>
<dbReference type="NCBIfam" id="TIGR00033">
    <property type="entry name" value="aroC"/>
    <property type="match status" value="1"/>
</dbReference>
<dbReference type="NCBIfam" id="NF003793">
    <property type="entry name" value="PRK05382.1"/>
    <property type="match status" value="1"/>
</dbReference>
<dbReference type="PANTHER" id="PTHR21085">
    <property type="entry name" value="CHORISMATE SYNTHASE"/>
    <property type="match status" value="1"/>
</dbReference>
<dbReference type="PANTHER" id="PTHR21085:SF0">
    <property type="entry name" value="CHORISMATE SYNTHASE"/>
    <property type="match status" value="1"/>
</dbReference>
<dbReference type="Pfam" id="PF01264">
    <property type="entry name" value="Chorismate_synt"/>
    <property type="match status" value="1"/>
</dbReference>
<dbReference type="PIRSF" id="PIRSF001456">
    <property type="entry name" value="Chorismate_synth"/>
    <property type="match status" value="1"/>
</dbReference>
<dbReference type="SUPFAM" id="SSF103263">
    <property type="entry name" value="Chorismate synthase, AroC"/>
    <property type="match status" value="1"/>
</dbReference>
<dbReference type="PROSITE" id="PS00787">
    <property type="entry name" value="CHORISMATE_SYNTHASE_1"/>
    <property type="match status" value="1"/>
</dbReference>
<dbReference type="PROSITE" id="PS00788">
    <property type="entry name" value="CHORISMATE_SYNTHASE_2"/>
    <property type="match status" value="1"/>
</dbReference>
<dbReference type="PROSITE" id="PS00789">
    <property type="entry name" value="CHORISMATE_SYNTHASE_3"/>
    <property type="match status" value="1"/>
</dbReference>
<protein>
    <recommendedName>
        <fullName evidence="1">Chorismate synthase</fullName>
        <shortName evidence="1">CS</shortName>
        <ecNumber evidence="1">4.2.3.5</ecNumber>
    </recommendedName>
    <alternativeName>
        <fullName evidence="1">5-enolpyruvylshikimate-3-phosphate phospholyase</fullName>
    </alternativeName>
</protein>
<comment type="function">
    <text evidence="1">Catalyzes the anti-1,4-elimination of the C-3 phosphate and the C-6 proR hydrogen from 5-enolpyruvylshikimate-3-phosphate (EPSP) to yield chorismate, which is the branch point compound that serves as the starting substrate for the three terminal pathways of aromatic amino acid biosynthesis. This reaction introduces a second double bond into the aromatic ring system.</text>
</comment>
<comment type="catalytic activity">
    <reaction evidence="1">
        <text>5-O-(1-carboxyvinyl)-3-phosphoshikimate = chorismate + phosphate</text>
        <dbReference type="Rhea" id="RHEA:21020"/>
        <dbReference type="ChEBI" id="CHEBI:29748"/>
        <dbReference type="ChEBI" id="CHEBI:43474"/>
        <dbReference type="ChEBI" id="CHEBI:57701"/>
        <dbReference type="EC" id="4.2.3.5"/>
    </reaction>
</comment>
<comment type="cofactor">
    <cofactor evidence="1">
        <name>FMNH2</name>
        <dbReference type="ChEBI" id="CHEBI:57618"/>
    </cofactor>
    <text evidence="1">Reduced FMN (FMNH(2)).</text>
</comment>
<comment type="pathway">
    <text evidence="1">Metabolic intermediate biosynthesis; chorismate biosynthesis; chorismate from D-erythrose 4-phosphate and phosphoenolpyruvate: step 7/7.</text>
</comment>
<comment type="subunit">
    <text evidence="1">Homotetramer.</text>
</comment>
<comment type="similarity">
    <text evidence="1">Belongs to the chorismate synthase family.</text>
</comment>
<name>AROC_STAA3</name>
<accession>Q2FGX4</accession>
<proteinExistence type="inferred from homology"/>
<organism>
    <name type="scientific">Staphylococcus aureus (strain USA300)</name>
    <dbReference type="NCBI Taxonomy" id="367830"/>
    <lineage>
        <taxon>Bacteria</taxon>
        <taxon>Bacillati</taxon>
        <taxon>Bacillota</taxon>
        <taxon>Bacilli</taxon>
        <taxon>Bacillales</taxon>
        <taxon>Staphylococcaceae</taxon>
        <taxon>Staphylococcus</taxon>
    </lineage>
</organism>
<feature type="chain" id="PRO_0000256339" description="Chorismate synthase">
    <location>
        <begin position="1"/>
        <end position="388"/>
    </location>
</feature>
<feature type="binding site" evidence="1">
    <location>
        <position position="39"/>
    </location>
    <ligand>
        <name>NADP(+)</name>
        <dbReference type="ChEBI" id="CHEBI:58349"/>
    </ligand>
</feature>
<feature type="binding site" evidence="1">
    <location>
        <position position="45"/>
    </location>
    <ligand>
        <name>NADP(+)</name>
        <dbReference type="ChEBI" id="CHEBI:58349"/>
    </ligand>
</feature>
<feature type="binding site" evidence="1">
    <location>
        <begin position="132"/>
        <end position="134"/>
    </location>
    <ligand>
        <name>FMN</name>
        <dbReference type="ChEBI" id="CHEBI:58210"/>
    </ligand>
</feature>
<feature type="binding site" evidence="1">
    <location>
        <begin position="251"/>
        <end position="252"/>
    </location>
    <ligand>
        <name>FMN</name>
        <dbReference type="ChEBI" id="CHEBI:58210"/>
    </ligand>
</feature>
<feature type="binding site" evidence="1">
    <location>
        <position position="296"/>
    </location>
    <ligand>
        <name>FMN</name>
        <dbReference type="ChEBI" id="CHEBI:58210"/>
    </ligand>
</feature>
<feature type="binding site" evidence="1">
    <location>
        <begin position="311"/>
        <end position="315"/>
    </location>
    <ligand>
        <name>FMN</name>
        <dbReference type="ChEBI" id="CHEBI:58210"/>
    </ligand>
</feature>
<feature type="binding site" evidence="1">
    <location>
        <position position="337"/>
    </location>
    <ligand>
        <name>FMN</name>
        <dbReference type="ChEBI" id="CHEBI:58210"/>
    </ligand>
</feature>
<keyword id="KW-0028">Amino-acid biosynthesis</keyword>
<keyword id="KW-0057">Aromatic amino acid biosynthesis</keyword>
<keyword id="KW-0274">FAD</keyword>
<keyword id="KW-0285">Flavoprotein</keyword>
<keyword id="KW-0288">FMN</keyword>
<keyword id="KW-0456">Lyase</keyword>
<keyword id="KW-0521">NADP</keyword>
<sequence>MRYLTSGESHGPQLTVIVEGVPANIEIKVEDINKEMFKRQGGYGRGRRMQIEKDTVEIVSGVRNGYTLGSPITMVVTNDDFTHWRKIMGAAPISEEERENMKRTITKPRPGHADLVGGMKYNHRDLRNVLERSSARETAARVAVGALCKVLLQQLDIDIYSRVVEIGGIKDKDFYDSETFKANLDRNDVRVIDDSIAQAMRDKIDEAKNEGDSIGGVVQVVVENMPVGVGSYVHYDRKLDGKIAQGVVSINAFKGVSFGEGFKAAEKPGSEIQDEILYNSEIGYYRGSNHLGGLEGGMSNGMPIIVNGVMKPIPTLYKPLNSVDINTKEDFKATIERSDSCAVPAASIVCEHVVAFEIAKALLEEFQSNHIEQLKQQIIERRQLNIEF</sequence>
<gene>
    <name evidence="1" type="primary">aroC</name>
    <name type="ordered locus">SAUSA300_1357</name>
</gene>